<organism>
    <name type="scientific">Helicobacter pylori (strain ATCC 700392 / 26695)</name>
    <name type="common">Campylobacter pylori</name>
    <dbReference type="NCBI Taxonomy" id="85962"/>
    <lineage>
        <taxon>Bacteria</taxon>
        <taxon>Pseudomonadati</taxon>
        <taxon>Campylobacterota</taxon>
        <taxon>Epsilonproteobacteria</taxon>
        <taxon>Campylobacterales</taxon>
        <taxon>Helicobacteraceae</taxon>
        <taxon>Helicobacter</taxon>
    </lineage>
</organism>
<keyword id="KW-1005">Bacterial flagellum biogenesis</keyword>
<keyword id="KW-1006">Bacterial flagellum protein export</keyword>
<keyword id="KW-0997">Cell inner membrane</keyword>
<keyword id="KW-1003">Cell membrane</keyword>
<keyword id="KW-0472">Membrane</keyword>
<keyword id="KW-0653">Protein transport</keyword>
<keyword id="KW-1185">Reference proteome</keyword>
<keyword id="KW-0812">Transmembrane</keyword>
<keyword id="KW-1133">Transmembrane helix</keyword>
<keyword id="KW-0813">Transport</keyword>
<reference key="1">
    <citation type="journal article" date="1997" name="Nature">
        <title>The complete genome sequence of the gastric pathogen Helicobacter pylori.</title>
        <authorList>
            <person name="Tomb J.-F."/>
            <person name="White O."/>
            <person name="Kerlavage A.R."/>
            <person name="Clayton R.A."/>
            <person name="Sutton G.G."/>
            <person name="Fleischmann R.D."/>
            <person name="Ketchum K.A."/>
            <person name="Klenk H.-P."/>
            <person name="Gill S.R."/>
            <person name="Dougherty B.A."/>
            <person name="Nelson K.E."/>
            <person name="Quackenbush J."/>
            <person name="Zhou L."/>
            <person name="Kirkness E.F."/>
            <person name="Peterson S.N."/>
            <person name="Loftus B.J."/>
            <person name="Richardson D.L."/>
            <person name="Dodson R.J."/>
            <person name="Khalak H.G."/>
            <person name="Glodek A."/>
            <person name="McKenney K."/>
            <person name="FitzGerald L.M."/>
            <person name="Lee N."/>
            <person name="Adams M.D."/>
            <person name="Hickey E.K."/>
            <person name="Berg D.E."/>
            <person name="Gocayne J.D."/>
            <person name="Utterback T.R."/>
            <person name="Peterson J.D."/>
            <person name="Kelley J.M."/>
            <person name="Cotton M.D."/>
            <person name="Weidman J.F."/>
            <person name="Fujii C."/>
            <person name="Bowman C."/>
            <person name="Watthey L."/>
            <person name="Wallin E."/>
            <person name="Hayes W.S."/>
            <person name="Borodovsky M."/>
            <person name="Karp P.D."/>
            <person name="Smith H.O."/>
            <person name="Fraser C.M."/>
            <person name="Venter J.C."/>
        </authorList>
    </citation>
    <scope>NUCLEOTIDE SEQUENCE [LARGE SCALE GENOMIC DNA]</scope>
    <source>
        <strain>ATCC 700392 / 26695</strain>
    </source>
</reference>
<protein>
    <recommendedName>
        <fullName>Flagellar biosynthetic protein FlhB</fullName>
    </recommendedName>
</protein>
<evidence type="ECO:0000250" key="1"/>
<evidence type="ECO:0000255" key="2"/>
<evidence type="ECO:0000305" key="3"/>
<feature type="chain" id="PRO_0000180951" description="Flagellar biosynthetic protein FlhB">
    <location>
        <begin position="1"/>
        <end position="358"/>
    </location>
</feature>
<feature type="transmembrane region" description="Helical" evidence="2">
    <location>
        <begin position="31"/>
        <end position="51"/>
    </location>
</feature>
<feature type="transmembrane region" description="Helical" evidence="2">
    <location>
        <begin position="86"/>
        <end position="106"/>
    </location>
</feature>
<feature type="transmembrane region" description="Helical" evidence="2">
    <location>
        <begin position="144"/>
        <end position="164"/>
    </location>
</feature>
<feature type="transmembrane region" description="Helical" evidence="2">
    <location>
        <begin position="187"/>
        <end position="207"/>
    </location>
</feature>
<feature type="transmembrane region" description="Helical" evidence="2">
    <location>
        <begin position="323"/>
        <end position="343"/>
    </location>
</feature>
<proteinExistence type="inferred from homology"/>
<gene>
    <name type="primary">flhB</name>
    <name type="ordered locus">HP_0770</name>
</gene>
<comment type="function">
    <text evidence="1">Required for formation of the rod structure in the basal body of the flagellar apparatus. Together with FliI and FliH, may constitute the export apparatus of flagellin (By similarity).</text>
</comment>
<comment type="subcellular location">
    <subcellularLocation>
        <location evidence="3">Cell inner membrane</location>
        <topology evidence="3">Multi-pass membrane protein</topology>
    </subcellularLocation>
</comment>
<comment type="similarity">
    <text evidence="3">Belongs to the type III secretion exporter family.</text>
</comment>
<sequence>MAEEEKTELPSAKKIQKAREEGNVPKSMEVVGVLGLLAGLISIFVFFIWWVDGFSEMYRHVLKDFSLDFSKESVQELFNQLAKDTFLLLLPILIILVVVAFLSNVLQFGWLFAPKVIEPKFSKINPINGVKNLFSLKKLLDGSLITLKVFLAFFLGFFIFSLFLGELNHAALLNLQGQLLWFKNKALWLISSLLFLFFVLAFIDLAIKRRQYTNSLKMTKQEVKDEYKQQEGNPEIKAKIRQMMLKNATNKMMQEIPKANVVVTNPTHYAVALKFDEEHPVPVVVAKGTDYLAIRIKGIAREHDIEIIENKTLARELYRDVKLNAAIPEELFEAVAIVFAQVAKLEQERQKQKIIKPL</sequence>
<dbReference type="EMBL" id="AE000511">
    <property type="protein sequence ID" value="AAD07819.1"/>
    <property type="molecule type" value="Genomic_DNA"/>
</dbReference>
<dbReference type="PIR" id="B64616">
    <property type="entry name" value="B64616"/>
</dbReference>
<dbReference type="RefSeq" id="NP_207563.1">
    <property type="nucleotide sequence ID" value="NC_000915.1"/>
</dbReference>
<dbReference type="RefSeq" id="WP_000796857.1">
    <property type="nucleotide sequence ID" value="NC_018939.1"/>
</dbReference>
<dbReference type="SMR" id="P56416"/>
<dbReference type="DIP" id="DIP-3472N"/>
<dbReference type="FunCoup" id="P56416">
    <property type="interactions" value="59"/>
</dbReference>
<dbReference type="IntAct" id="P56416">
    <property type="interactions" value="9"/>
</dbReference>
<dbReference type="MINT" id="P56416"/>
<dbReference type="STRING" id="85962.HP_0770"/>
<dbReference type="PaxDb" id="85962-C694_03955"/>
<dbReference type="EnsemblBacteria" id="AAD07819">
    <property type="protein sequence ID" value="AAD07819"/>
    <property type="gene ID" value="HP_0770"/>
</dbReference>
<dbReference type="KEGG" id="heo:C694_03955"/>
<dbReference type="KEGG" id="hpy:HP_0770"/>
<dbReference type="PATRIC" id="fig|85962.47.peg.822"/>
<dbReference type="eggNOG" id="COG1377">
    <property type="taxonomic scope" value="Bacteria"/>
</dbReference>
<dbReference type="InParanoid" id="P56416"/>
<dbReference type="OrthoDB" id="9807950at2"/>
<dbReference type="PhylomeDB" id="P56416"/>
<dbReference type="Proteomes" id="UP000000429">
    <property type="component" value="Chromosome"/>
</dbReference>
<dbReference type="GO" id="GO:0005886">
    <property type="term" value="C:plasma membrane"/>
    <property type="evidence" value="ECO:0000318"/>
    <property type="project" value="GO_Central"/>
</dbReference>
<dbReference type="GO" id="GO:0044780">
    <property type="term" value="P:bacterial-type flagellum assembly"/>
    <property type="evidence" value="ECO:0007669"/>
    <property type="project" value="InterPro"/>
</dbReference>
<dbReference type="GO" id="GO:0009306">
    <property type="term" value="P:protein secretion"/>
    <property type="evidence" value="ECO:0007669"/>
    <property type="project" value="InterPro"/>
</dbReference>
<dbReference type="FunFam" id="3.40.1690.10:FF:000001">
    <property type="entry name" value="Flagellar biosynthetic protein FlhB"/>
    <property type="match status" value="1"/>
</dbReference>
<dbReference type="Gene3D" id="6.10.250.2080">
    <property type="match status" value="1"/>
</dbReference>
<dbReference type="Gene3D" id="3.40.1690.10">
    <property type="entry name" value="secretion proteins EscU"/>
    <property type="match status" value="1"/>
</dbReference>
<dbReference type="InterPro" id="IPR006136">
    <property type="entry name" value="FlhB"/>
</dbReference>
<dbReference type="InterPro" id="IPR006135">
    <property type="entry name" value="T3SS_substrate_exporter"/>
</dbReference>
<dbReference type="InterPro" id="IPR029025">
    <property type="entry name" value="T3SS_substrate_exporter_C"/>
</dbReference>
<dbReference type="NCBIfam" id="TIGR00328">
    <property type="entry name" value="flhB"/>
    <property type="match status" value="1"/>
</dbReference>
<dbReference type="PANTHER" id="PTHR30531">
    <property type="entry name" value="FLAGELLAR BIOSYNTHETIC PROTEIN FLHB"/>
    <property type="match status" value="1"/>
</dbReference>
<dbReference type="PANTHER" id="PTHR30531:SF12">
    <property type="entry name" value="FLAGELLAR BIOSYNTHETIC PROTEIN FLHB"/>
    <property type="match status" value="1"/>
</dbReference>
<dbReference type="Pfam" id="PF01312">
    <property type="entry name" value="Bac_export_2"/>
    <property type="match status" value="1"/>
</dbReference>
<dbReference type="PRINTS" id="PR00950">
    <property type="entry name" value="TYPE3IMSPROT"/>
</dbReference>
<dbReference type="SUPFAM" id="SSF160544">
    <property type="entry name" value="EscU C-terminal domain-like"/>
    <property type="match status" value="1"/>
</dbReference>
<name>FLHB_HELPY</name>
<accession>P56416</accession>